<protein>
    <recommendedName>
        <fullName evidence="9">Anti-sigma-I factor RsgI3</fullName>
    </recommendedName>
</protein>
<comment type="function">
    <text evidence="1">Anti-sigma factor for SigI3. Negatively regulates SigI3 activity through direct interaction. Binding of the polysaccharide substrate to the extracellular C-terminal sensing domain of RsgI3 may induce a conformational change in its N-terminal cytoplasmic region, leading to the release and activation of SigI3.</text>
</comment>
<comment type="subunit">
    <text evidence="4">Interacts (via RsgI N-terminal anti-sigma domain) with SigI3.</text>
</comment>
<comment type="subcellular location">
    <subcellularLocation>
        <location evidence="9">Cell membrane</location>
        <topology evidence="2">Single-pass membrane protein</topology>
    </subcellularLocation>
</comment>
<comment type="induction">
    <text evidence="7">Up-regulated in pretreated yellow poplar (PYP)-grown cells.</text>
</comment>
<comment type="domain">
    <text evidence="6">The PA14 dyad binds strongly to pectin as well as to polygalacturonic acid and alfalfa cell walls, but to a lesser extent.</text>
</comment>
<organism>
    <name type="scientific">Acetivibrio thermocellus (strain ATCC 27405 / DSM 1237 / JCM 9322 / NBRC 103400 / NCIMB 10682 / NRRL B-4536 / VPI 7372)</name>
    <name type="common">Clostridium thermocellum</name>
    <dbReference type="NCBI Taxonomy" id="203119"/>
    <lineage>
        <taxon>Bacteria</taxon>
        <taxon>Bacillati</taxon>
        <taxon>Bacillota</taxon>
        <taxon>Clostridia</taxon>
        <taxon>Eubacteriales</taxon>
        <taxon>Oscillospiraceae</taxon>
        <taxon>Acetivibrio</taxon>
    </lineage>
</organism>
<sequence length="644" mass="72680">MDNIGVIIKIEGNEAIVMTDDCSFKKVPIKDGMHPGQKILVPNNEVIQKENKSIKRISAVATGIAAVFLMVLSLIWINKPGRPDGIYAYIDVDINPSLNFLIDREGKVKALNPLNDDAQEIIRGVEFEDMFFSEALTQIIKISKAKGIIDENKTNYVLICAALDDNYNLQSDDKSRAQTEFEEFLDGIRESIEKACGNTVIPQTVKVPFEYLKMAKQNDVSMGRYLVYQKLEDIGVNLSIEELKSLDIDEILKKYGVGFDELFKSEYTELPYGTLQTGEDSVVSTEDVPVSPKNAFETMAVPTNTPSISTKPSATPAENPTPKLTQKPTPVPAKTGERTSTTPTPTPAPTVRNGTGSGLRGEYYNNMDFSRFQFVRIDPCIDFDWGEGTPDQSIGKDTYSVRWTGKVEPRYSETYTFYTVTDDGVRLWVDGVLLIDKWKSQSATEHSEQIYLEAGKKYDIKMEYYQHVRAASAKLMWSSKSQQKEIIPSSQLYPSDGPLPQKDVNGLSAEYYGDAELKDKRFTRIDDAINFNWDKDFPVGELKDGKFSVRWVGKIDTRYTEEYTFHTVANGGVRVWINNVLIIDNWQNQGKEAENSGKIELKAGRQYDIKVEYCNYGEPAFIKLLWSSQRQKKEVVPSKNLFAD</sequence>
<reference key="1">
    <citation type="submission" date="2007-02" db="EMBL/GenBank/DDBJ databases">
        <title>Complete sequence of Clostridium thermocellum ATCC 27405.</title>
        <authorList>
            <consortium name="US DOE Joint Genome Institute"/>
            <person name="Copeland A."/>
            <person name="Lucas S."/>
            <person name="Lapidus A."/>
            <person name="Barry K."/>
            <person name="Detter J.C."/>
            <person name="Glavina del Rio T."/>
            <person name="Hammon N."/>
            <person name="Israni S."/>
            <person name="Dalin E."/>
            <person name="Tice H."/>
            <person name="Pitluck S."/>
            <person name="Chertkov O."/>
            <person name="Brettin T."/>
            <person name="Bruce D."/>
            <person name="Han C."/>
            <person name="Tapia R."/>
            <person name="Gilna P."/>
            <person name="Schmutz J."/>
            <person name="Larimer F."/>
            <person name="Land M."/>
            <person name="Hauser L."/>
            <person name="Kyrpides N."/>
            <person name="Mikhailova N."/>
            <person name="Wu J.H.D."/>
            <person name="Newcomb M."/>
            <person name="Richardson P."/>
        </authorList>
    </citation>
    <scope>NUCLEOTIDE SEQUENCE [LARGE SCALE GENOMIC DNA]</scope>
    <source>
        <strain>ATCC 27405 / DSM 1237 / JCM 9322 / NBRC 103400 / NCIMB 10682 / NRRL B-4536 / VPI 7372</strain>
    </source>
</reference>
<reference key="2">
    <citation type="submission" date="2014-09" db="EMBL/GenBank/DDBJ databases">
        <authorList>
            <person name="Borovok I."/>
        </authorList>
    </citation>
    <scope>NUCLEOTIDE SEQUENCE [GENOMIC DNA]</scope>
</reference>
<reference key="3">
    <citation type="journal article" date="2010" name="FEMS Microbiol. Lett.">
        <title>The unique set of putative membrane-associated anti-sigma factors in Clostridium thermocellum suggests a novel extracellular carbohydrate-sensing mechanism involved in gene regulation.</title>
        <authorList>
            <person name="Kahel-Raifer H."/>
            <person name="Jindou S."/>
            <person name="Bahari L."/>
            <person name="Nataf Y."/>
            <person name="Shoham Y."/>
            <person name="Bayer E.A."/>
            <person name="Borovok I."/>
            <person name="Lamed R."/>
        </authorList>
    </citation>
    <scope>NOMENCLATURE</scope>
    <scope>DOMAIN</scope>
    <source>
        <strain>ATCC 27405 / DSM 1237 / JCM 9322 / NBRC 103400 / NCIMB 10682 / NRRL B-4536 / VPI 7372</strain>
    </source>
</reference>
<reference key="4">
    <citation type="journal article" date="2014" name="Front. Microbiol.">
        <title>Comparison of transcriptional profiles of Clostridium thermocellum grown on cellobiose and pretreated yellow poplar using RNA-Seq.</title>
        <authorList>
            <person name="Wei H."/>
            <person name="Fu Y."/>
            <person name="Magnusson L."/>
            <person name="Baker J.O."/>
            <person name="Maness P.C."/>
            <person name="Xu Q."/>
            <person name="Yang S."/>
            <person name="Bowersox A."/>
            <person name="Bogorad I."/>
            <person name="Wang W."/>
            <person name="Tucker M.P."/>
            <person name="Himmel M.E."/>
            <person name="Ding S.Y."/>
        </authorList>
    </citation>
    <scope>INDUCTION</scope>
    <source>
        <strain>ATCC 27405 / DSM 1237 / JCM 9322 / NBRC 103400 / NCIMB 10682 / NRRL B-4536 / VPI 7372</strain>
    </source>
</reference>
<accession>A3DC75</accession>
<name>RSGI3_ACET2</name>
<feature type="chain" id="PRO_0000436546" description="Anti-sigma-I factor RsgI3">
    <location>
        <begin position="1"/>
        <end position="644"/>
    </location>
</feature>
<feature type="topological domain" description="Cytoplasmic" evidence="9">
    <location>
        <begin position="1"/>
        <end position="56"/>
    </location>
</feature>
<feature type="transmembrane region" description="Helical" evidence="2">
    <location>
        <begin position="57"/>
        <end position="77"/>
    </location>
</feature>
<feature type="topological domain" description="Extracellular" evidence="9">
    <location>
        <begin position="78"/>
        <end position="644"/>
    </location>
</feature>
<feature type="domain" description="RsgI N-terminal anti-sigma" evidence="4">
    <location>
        <begin position="3"/>
        <end position="50"/>
    </location>
</feature>
<feature type="domain" description="PA14 1" evidence="3">
    <location>
        <begin position="354"/>
        <end position="491"/>
    </location>
</feature>
<feature type="domain" description="PA14 2" evidence="3">
    <location>
        <begin position="502"/>
        <end position="640"/>
    </location>
</feature>
<feature type="region of interest" description="Disordered" evidence="5">
    <location>
        <begin position="302"/>
        <end position="359"/>
    </location>
</feature>
<feature type="compositionally biased region" description="Polar residues" evidence="5">
    <location>
        <begin position="302"/>
        <end position="328"/>
    </location>
</feature>
<feature type="strand" evidence="11">
    <location>
        <begin position="358"/>
        <end position="366"/>
    </location>
</feature>
<feature type="strand" evidence="11">
    <location>
        <begin position="371"/>
        <end position="380"/>
    </location>
</feature>
<feature type="strand" evidence="11">
    <location>
        <begin position="382"/>
        <end position="384"/>
    </location>
</feature>
<feature type="strand" evidence="11">
    <location>
        <begin position="396"/>
        <end position="407"/>
    </location>
</feature>
<feature type="strand" evidence="11">
    <location>
        <begin position="410"/>
        <end position="423"/>
    </location>
</feature>
<feature type="strand" evidence="11">
    <location>
        <begin position="425"/>
        <end position="429"/>
    </location>
</feature>
<feature type="strand" evidence="11">
    <location>
        <begin position="432"/>
        <end position="437"/>
    </location>
</feature>
<feature type="strand" evidence="11">
    <location>
        <begin position="442"/>
        <end position="452"/>
    </location>
</feature>
<feature type="strand" evidence="11">
    <location>
        <begin position="458"/>
        <end position="466"/>
    </location>
</feature>
<feature type="strand" evidence="11">
    <location>
        <begin position="472"/>
        <end position="478"/>
    </location>
</feature>
<feature type="strand" evidence="11">
    <location>
        <begin position="480"/>
        <end position="482"/>
    </location>
</feature>
<feature type="strand" evidence="11">
    <location>
        <begin position="484"/>
        <end position="486"/>
    </location>
</feature>
<feature type="helix" evidence="11">
    <location>
        <begin position="489"/>
        <end position="491"/>
    </location>
</feature>
<feature type="strand" evidence="11">
    <location>
        <begin position="492"/>
        <end position="494"/>
    </location>
</feature>
<feature type="strand" evidence="11">
    <location>
        <begin position="505"/>
        <end position="514"/>
    </location>
</feature>
<feature type="strand" evidence="11">
    <location>
        <begin position="519"/>
        <end position="532"/>
    </location>
</feature>
<feature type="strand" evidence="11">
    <location>
        <begin position="538"/>
        <end position="541"/>
    </location>
</feature>
<feature type="strand" evidence="11">
    <location>
        <begin position="546"/>
        <end position="555"/>
    </location>
</feature>
<feature type="strand" evidence="11">
    <location>
        <begin position="558"/>
        <end position="577"/>
    </location>
</feature>
<feature type="strand" evidence="11">
    <location>
        <begin position="580"/>
        <end position="585"/>
    </location>
</feature>
<feature type="strand" evidence="11">
    <location>
        <begin position="593"/>
        <end position="601"/>
    </location>
</feature>
<feature type="strand" evidence="11">
    <location>
        <begin position="607"/>
        <end position="618"/>
    </location>
</feature>
<feature type="strand" evidence="11">
    <location>
        <begin position="621"/>
        <end position="627"/>
    </location>
</feature>
<feature type="strand" evidence="11">
    <location>
        <begin position="629"/>
        <end position="631"/>
    </location>
</feature>
<feature type="strand" evidence="11">
    <location>
        <begin position="633"/>
        <end position="635"/>
    </location>
</feature>
<feature type="helix" evidence="11">
    <location>
        <begin position="638"/>
        <end position="640"/>
    </location>
</feature>
<keyword id="KW-0002">3D-structure</keyword>
<keyword id="KW-1003">Cell membrane</keyword>
<keyword id="KW-0472">Membrane</keyword>
<keyword id="KW-1185">Reference proteome</keyword>
<keyword id="KW-0812">Transmembrane</keyword>
<keyword id="KW-1133">Transmembrane helix</keyword>
<evidence type="ECO:0000250" key="1">
    <source>
        <dbReference type="UniProtKB" id="A3DBH1"/>
    </source>
</evidence>
<evidence type="ECO:0000255" key="2"/>
<evidence type="ECO:0000255" key="3">
    <source>
        <dbReference type="PROSITE-ProRule" id="PRU01164"/>
    </source>
</evidence>
<evidence type="ECO:0000255" key="4">
    <source>
        <dbReference type="PROSITE-ProRule" id="PRU01196"/>
    </source>
</evidence>
<evidence type="ECO:0000256" key="5">
    <source>
        <dbReference type="SAM" id="MobiDB-lite"/>
    </source>
</evidence>
<evidence type="ECO:0000269" key="6">
    <source>
    </source>
</evidence>
<evidence type="ECO:0000269" key="7">
    <source>
    </source>
</evidence>
<evidence type="ECO:0000303" key="8">
    <source>
    </source>
</evidence>
<evidence type="ECO:0000305" key="9"/>
<evidence type="ECO:0000312" key="10">
    <source>
        <dbReference type="EMBL" id="ABN51554.1"/>
    </source>
</evidence>
<evidence type="ECO:0007829" key="11">
    <source>
        <dbReference type="PDB" id="6QE7"/>
    </source>
</evidence>
<proteinExistence type="evidence at protein level"/>
<gene>
    <name evidence="8" type="primary">rsgI3</name>
    <name evidence="10" type="ordered locus">Cthe_0316</name>
</gene>
<dbReference type="EMBL" id="CP000568">
    <property type="protein sequence ID" value="ABN51554.1"/>
    <property type="molecule type" value="Genomic_DNA"/>
</dbReference>
<dbReference type="EMBL" id="KM504391">
    <property type="protein sequence ID" value="AIY67765.1"/>
    <property type="molecule type" value="Genomic_DNA"/>
</dbReference>
<dbReference type="RefSeq" id="WP_003512516.1">
    <property type="nucleotide sequence ID" value="NC_009012.1"/>
</dbReference>
<dbReference type="PDB" id="6QE7">
    <property type="method" value="X-ray"/>
    <property type="resolution" value="2.06 A"/>
    <property type="chains" value="A/B/C=358-644"/>
</dbReference>
<dbReference type="PDBsum" id="6QE7"/>
<dbReference type="SMR" id="A3DC75"/>
<dbReference type="STRING" id="203119.Cthe_0316"/>
<dbReference type="GeneID" id="35804786"/>
<dbReference type="KEGG" id="cth:Cthe_0316"/>
<dbReference type="eggNOG" id="COG2133">
    <property type="taxonomic scope" value="Bacteria"/>
</dbReference>
<dbReference type="eggNOG" id="COG5183">
    <property type="taxonomic scope" value="Bacteria"/>
</dbReference>
<dbReference type="HOGENOM" id="CLU_424960_0_0_9"/>
<dbReference type="OrthoDB" id="9800626at2"/>
<dbReference type="Proteomes" id="UP000002145">
    <property type="component" value="Chromosome"/>
</dbReference>
<dbReference type="GO" id="GO:0005886">
    <property type="term" value="C:plasma membrane"/>
    <property type="evidence" value="ECO:0007669"/>
    <property type="project" value="UniProtKB-SubCell"/>
</dbReference>
<dbReference type="Gene3D" id="3.90.182.10">
    <property type="entry name" value="Toxin - Anthrax Protective Antigen,domain 1"/>
    <property type="match status" value="2"/>
</dbReference>
<dbReference type="InterPro" id="IPR024449">
    <property type="entry name" value="Anti-sigma_RsgI_N"/>
</dbReference>
<dbReference type="InterPro" id="IPR037524">
    <property type="entry name" value="PA14/GLEYA"/>
</dbReference>
<dbReference type="InterPro" id="IPR011658">
    <property type="entry name" value="PA14_dom"/>
</dbReference>
<dbReference type="InterPro" id="IPR055431">
    <property type="entry name" value="RsgI_M"/>
</dbReference>
<dbReference type="Pfam" id="PF07691">
    <property type="entry name" value="PA14"/>
    <property type="match status" value="2"/>
</dbReference>
<dbReference type="Pfam" id="PF23750">
    <property type="entry name" value="RsgI_M"/>
    <property type="match status" value="1"/>
</dbReference>
<dbReference type="Pfam" id="PF12791">
    <property type="entry name" value="RsgI_N"/>
    <property type="match status" value="1"/>
</dbReference>
<dbReference type="SMART" id="SM00758">
    <property type="entry name" value="PA14"/>
    <property type="match status" value="2"/>
</dbReference>
<dbReference type="SUPFAM" id="SSF56988">
    <property type="entry name" value="Anthrax protective antigen"/>
    <property type="match status" value="2"/>
</dbReference>
<dbReference type="PROSITE" id="PS51820">
    <property type="entry name" value="PA14"/>
    <property type="match status" value="2"/>
</dbReference>
<dbReference type="PROSITE" id="PS51849">
    <property type="entry name" value="RSGI_N"/>
    <property type="match status" value="1"/>
</dbReference>